<organism>
    <name type="scientific">Bacillus subtilis (strain 168)</name>
    <dbReference type="NCBI Taxonomy" id="224308"/>
    <lineage>
        <taxon>Bacteria</taxon>
        <taxon>Bacillati</taxon>
        <taxon>Bacillota</taxon>
        <taxon>Bacilli</taxon>
        <taxon>Bacillales</taxon>
        <taxon>Bacillaceae</taxon>
        <taxon>Bacillus</taxon>
    </lineage>
</organism>
<evidence type="ECO:0000250" key="1">
    <source>
        <dbReference type="UniProtKB" id="P39172"/>
    </source>
</evidence>
<evidence type="ECO:0000250" key="2">
    <source>
        <dbReference type="UniProtKB" id="Q8CWN2"/>
    </source>
</evidence>
<evidence type="ECO:0000255" key="3">
    <source>
        <dbReference type="PROSITE-ProRule" id="PRU00303"/>
    </source>
</evidence>
<evidence type="ECO:0000269" key="4">
    <source>
    </source>
</evidence>
<evidence type="ECO:0000269" key="5">
    <source>
    </source>
</evidence>
<evidence type="ECO:0000269" key="6">
    <source>
    </source>
</evidence>
<evidence type="ECO:0000269" key="7">
    <source>
    </source>
</evidence>
<evidence type="ECO:0000305" key="8"/>
<evidence type="ECO:0000305" key="9">
    <source>
    </source>
</evidence>
<evidence type="ECO:0000305" key="10">
    <source ref="8"/>
</evidence>
<evidence type="ECO:0007744" key="11">
    <source>
        <dbReference type="PDB" id="2O1E"/>
    </source>
</evidence>
<evidence type="ECO:0007829" key="12">
    <source>
        <dbReference type="PDB" id="2O1E"/>
    </source>
</evidence>
<keyword id="KW-0002">3D-structure</keyword>
<keyword id="KW-1003">Cell membrane</keyword>
<keyword id="KW-0406">Ion transport</keyword>
<keyword id="KW-0449">Lipoprotein</keyword>
<keyword id="KW-0472">Membrane</keyword>
<keyword id="KW-0564">Palmitate</keyword>
<keyword id="KW-1185">Reference proteome</keyword>
<keyword id="KW-0732">Signal</keyword>
<keyword id="KW-0813">Transport</keyword>
<keyword id="KW-0862">Zinc</keyword>
<keyword id="KW-0864">Zinc transport</keyword>
<reference key="1">
    <citation type="journal article" date="1997" name="Microbiology">
        <title>A 32 kb nucleotide sequence from the region of the lincomycin-resistance gene (22 degrees-25 degrees) of the Bacillus subtilis chromosome and identification of the site of the lin-2 mutation.</title>
        <authorList>
            <person name="Kumano M."/>
            <person name="Tamakoshi A."/>
            <person name="Yamane K."/>
        </authorList>
    </citation>
    <scope>NUCLEOTIDE SEQUENCE [GENOMIC DNA]</scope>
    <source>
        <strain>168</strain>
    </source>
</reference>
<reference key="2">
    <citation type="journal article" date="1997" name="Nature">
        <title>The complete genome sequence of the Gram-positive bacterium Bacillus subtilis.</title>
        <authorList>
            <person name="Kunst F."/>
            <person name="Ogasawara N."/>
            <person name="Moszer I."/>
            <person name="Albertini A.M."/>
            <person name="Alloni G."/>
            <person name="Azevedo V."/>
            <person name="Bertero M.G."/>
            <person name="Bessieres P."/>
            <person name="Bolotin A."/>
            <person name="Borchert S."/>
            <person name="Borriss R."/>
            <person name="Boursier L."/>
            <person name="Brans A."/>
            <person name="Braun M."/>
            <person name="Brignell S.C."/>
            <person name="Bron S."/>
            <person name="Brouillet S."/>
            <person name="Bruschi C.V."/>
            <person name="Caldwell B."/>
            <person name="Capuano V."/>
            <person name="Carter N.M."/>
            <person name="Choi S.-K."/>
            <person name="Codani J.-J."/>
            <person name="Connerton I.F."/>
            <person name="Cummings N.J."/>
            <person name="Daniel R.A."/>
            <person name="Denizot F."/>
            <person name="Devine K.M."/>
            <person name="Duesterhoeft A."/>
            <person name="Ehrlich S.D."/>
            <person name="Emmerson P.T."/>
            <person name="Entian K.-D."/>
            <person name="Errington J."/>
            <person name="Fabret C."/>
            <person name="Ferrari E."/>
            <person name="Foulger D."/>
            <person name="Fritz C."/>
            <person name="Fujita M."/>
            <person name="Fujita Y."/>
            <person name="Fuma S."/>
            <person name="Galizzi A."/>
            <person name="Galleron N."/>
            <person name="Ghim S.-Y."/>
            <person name="Glaser P."/>
            <person name="Goffeau A."/>
            <person name="Golightly E.J."/>
            <person name="Grandi G."/>
            <person name="Guiseppi G."/>
            <person name="Guy B.J."/>
            <person name="Haga K."/>
            <person name="Haiech J."/>
            <person name="Harwood C.R."/>
            <person name="Henaut A."/>
            <person name="Hilbert H."/>
            <person name="Holsappel S."/>
            <person name="Hosono S."/>
            <person name="Hullo M.-F."/>
            <person name="Itaya M."/>
            <person name="Jones L.-M."/>
            <person name="Joris B."/>
            <person name="Karamata D."/>
            <person name="Kasahara Y."/>
            <person name="Klaerr-Blanchard M."/>
            <person name="Klein C."/>
            <person name="Kobayashi Y."/>
            <person name="Koetter P."/>
            <person name="Koningstein G."/>
            <person name="Krogh S."/>
            <person name="Kumano M."/>
            <person name="Kurita K."/>
            <person name="Lapidus A."/>
            <person name="Lardinois S."/>
            <person name="Lauber J."/>
            <person name="Lazarevic V."/>
            <person name="Lee S.-M."/>
            <person name="Levine A."/>
            <person name="Liu H."/>
            <person name="Masuda S."/>
            <person name="Mauel C."/>
            <person name="Medigue C."/>
            <person name="Medina N."/>
            <person name="Mellado R.P."/>
            <person name="Mizuno M."/>
            <person name="Moestl D."/>
            <person name="Nakai S."/>
            <person name="Noback M."/>
            <person name="Noone D."/>
            <person name="O'Reilly M."/>
            <person name="Ogawa K."/>
            <person name="Ogiwara A."/>
            <person name="Oudega B."/>
            <person name="Park S.-H."/>
            <person name="Parro V."/>
            <person name="Pohl T.M."/>
            <person name="Portetelle D."/>
            <person name="Porwollik S."/>
            <person name="Prescott A.M."/>
            <person name="Presecan E."/>
            <person name="Pujic P."/>
            <person name="Purnelle B."/>
            <person name="Rapoport G."/>
            <person name="Rey M."/>
            <person name="Reynolds S."/>
            <person name="Rieger M."/>
            <person name="Rivolta C."/>
            <person name="Rocha E."/>
            <person name="Roche B."/>
            <person name="Rose M."/>
            <person name="Sadaie Y."/>
            <person name="Sato T."/>
            <person name="Scanlan E."/>
            <person name="Schleich S."/>
            <person name="Schroeter R."/>
            <person name="Scoffone F."/>
            <person name="Sekiguchi J."/>
            <person name="Sekowska A."/>
            <person name="Seror S.J."/>
            <person name="Serror P."/>
            <person name="Shin B.-S."/>
            <person name="Soldo B."/>
            <person name="Sorokin A."/>
            <person name="Tacconi E."/>
            <person name="Takagi T."/>
            <person name="Takahashi H."/>
            <person name="Takemaru K."/>
            <person name="Takeuchi M."/>
            <person name="Tamakoshi A."/>
            <person name="Tanaka T."/>
            <person name="Terpstra P."/>
            <person name="Tognoni A."/>
            <person name="Tosato V."/>
            <person name="Uchiyama S."/>
            <person name="Vandenbol M."/>
            <person name="Vannier F."/>
            <person name="Vassarotti A."/>
            <person name="Viari A."/>
            <person name="Wambutt R."/>
            <person name="Wedler E."/>
            <person name="Wedler H."/>
            <person name="Weitzenegger T."/>
            <person name="Winters P."/>
            <person name="Wipat A."/>
            <person name="Yamamoto H."/>
            <person name="Yamane K."/>
            <person name="Yasumoto K."/>
            <person name="Yata K."/>
            <person name="Yoshida K."/>
            <person name="Yoshikawa H.-F."/>
            <person name="Zumstein E."/>
            <person name="Yoshikawa H."/>
            <person name="Danchin A."/>
        </authorList>
    </citation>
    <scope>NUCLEOTIDE SEQUENCE [LARGE SCALE GENOMIC DNA]</scope>
    <source>
        <strain>168</strain>
    </source>
</reference>
<reference key="3">
    <citation type="journal article" date="1998" name="J. Bacteriol.">
        <title>Identification of a zinc-specific metalloregulatory protein, Zur, controlling zinc transport operons in Bacillus subtilis.</title>
        <authorList>
            <person name="Gaballa A."/>
            <person name="Helmann J.D."/>
        </authorList>
    </citation>
    <scope>FUNCTION</scope>
    <scope>INDUCTION</scope>
    <scope>DISRUPTION PHENOTYPE</scope>
</reference>
<reference key="4">
    <citation type="journal article" date="2002" name="J. Bacteriol.">
        <title>Functional analysis of the Bacillus subtilis Zur regulon.</title>
        <authorList>
            <person name="Gaballa A."/>
            <person name="Wang T."/>
            <person name="Ye R.W."/>
            <person name="Helmann J.D."/>
        </authorList>
    </citation>
    <scope>INDUCTION</scope>
    <source>
        <strain>168</strain>
    </source>
</reference>
<reference key="5">
    <citation type="journal article" date="2004" name="Electrophoresis">
        <title>Profiling and comprehensive expression analysis of ABC transporter solute-binding proteins of Bacillus subtilis membrane based on a proteomic approach.</title>
        <authorList>
            <person name="Bunai K."/>
            <person name="Ariga M."/>
            <person name="Inoue T."/>
            <person name="Nozaki M."/>
            <person name="Ogane S."/>
            <person name="Kakeshita H."/>
            <person name="Nemoto T."/>
            <person name="Nakanishi H."/>
            <person name="Yamane K."/>
        </authorList>
    </citation>
    <scope>SUBCELLULAR LOCATION</scope>
    <scope>IDENTIFICATION BY MASS SPECTROMETRY</scope>
</reference>
<reference key="6">
    <citation type="journal article" date="2011" name="J. Biochem.">
        <title>ZnuABC and ZosA zinc transporters are differently involved in competence development in Bacillus subtilis.</title>
        <authorList>
            <person name="Ogura M."/>
        </authorList>
    </citation>
    <scope>FUNCTION IN COMPETENCE DEVELOPMENT</scope>
    <scope>DISRUPTION PHENOTYPE</scope>
    <scope>GENE NAME</scope>
    <source>
        <strain>168</strain>
    </source>
</reference>
<reference key="7">
    <citation type="journal article" date="2012" name="Mol. Microbiol.">
        <title>The biofilm formation defect of a Bacillus subtilis flotillin-defective mutant involves the protease FtsH.</title>
        <authorList>
            <person name="Yepes A."/>
            <person name="Schneider J."/>
            <person name="Mielich B."/>
            <person name="Koch G."/>
            <person name="Garcia-Betancur J.C."/>
            <person name="Ramamurthi K.S."/>
            <person name="Vlamakis H."/>
            <person name="Lopez D."/>
        </authorList>
    </citation>
    <scope>SUBCELLULAR LOCATION</scope>
    <source>
        <strain>168 / Marburg / ATCC 6051 / DSM 10 / JCM 1465 / NBRC 13719 / NCIMB 3610 / NRRL NRS-744 / VKM B-501</strain>
    </source>
</reference>
<reference evidence="11" key="8">
    <citation type="submission" date="2009-02" db="PDB data bank">
        <title>Crystal structure of the metal-dependent lipoprotein YcdH from Bacillus subtilis, northeast structural genomics target sr583.</title>
        <authorList>
            <consortium name="Northeast structural genomics consortium (NESG)"/>
        </authorList>
    </citation>
    <scope>X-RAY CRYSTALLOGRAPHY (2.6 ANGSTROMS) OF 22-319 IN COMPLEX WITH MANGANESE</scope>
</reference>
<accession>O34966</accession>
<accession>Q797R6</accession>
<sequence length="319" mass="35660">MFKKWSGLFVIAACFLLVAACGNSSTKGSADSKGDKLHVVTTFYPMYEFTKQIVKDKGDVDLLIPSSVEPHDWEPTPKDIANIQDADLFVYNSEYMETWVPSAEKSMGQGHAVFVNASKGIDLMEGSEEEHEEHDHGEHEHSHAMDPHVWLSPVLAQKEVKNITAQIVKQDPDNKEYYEKNSKEYIAKLQDLDKLYRTTAKKAEKKEFITQHTAFGYLAKEYGLKQVPIAGLSPDQEPSAASLAKLKTYAKEHNVKVIYFEEIASSKVADTLASEIGAKTEVLNTLEGLSKEEQDKGLGYIDIMKQNLDALKDSLLVKS</sequence>
<proteinExistence type="evidence at protein level"/>
<protein>
    <recommendedName>
        <fullName>High-affinity zinc uptake system protein ZnuA</fullName>
    </recommendedName>
</protein>
<gene>
    <name type="primary">znuA</name>
    <name type="synonym">adcA</name>
    <name type="synonym">ycdH</name>
    <name type="ordered locus">BSU02850</name>
</gene>
<comment type="function">
    <text evidence="2 5 7">Part of the ATP-binding cassette (ABC) transport system ZnuABC involved in zinc import (By similarity). Binds zinc with high affinity and specificity and delivers it to the membrane permease for translocation into the cytoplasm (By similarity). ZnuABC-mediated zinc transport is required for comF expression and competence development (PubMed:21813502, PubMed:9811636).</text>
</comment>
<comment type="subunit">
    <text evidence="8">The complex is composed of two ATP-binding proteins (ZnuC), two transmembrane proteins (ZnuB) and a solute-binding protein (ZnuA).</text>
</comment>
<comment type="subcellular location">
    <subcellularLocation>
        <location evidence="6 9">Cell membrane</location>
        <topology evidence="9">Lipid-anchor</topology>
    </subcellularLocation>
    <subcellularLocation>
        <location evidence="6">Membrane raft</location>
        <topology evidence="9">Lipid-anchor</topology>
    </subcellularLocation>
    <text evidence="6">Present in detergent-resistant membrane (DRM) fractions that may be equivalent to eukaryotic membrane rafts; these rafts include proteins involved in signaling, molecule trafficking and protein secretion.</text>
</comment>
<comment type="induction">
    <text evidence="4 7">Repressed by zinc via the metallo-regulatory protein Zur.</text>
</comment>
<comment type="disruption phenotype">
    <text evidence="5 7">Cells lacking this gene grow slowly in zinc-deficient medium; this effect is suppressed upon addition of exogenous Zn(2+). Growth is slower yet in a double knockout with YciC. Disruption results in low transformability.</text>
</comment>
<comment type="similarity">
    <text evidence="8">Belongs to the bacterial solute-binding protein 9 family.</text>
</comment>
<feature type="signal peptide" evidence="3">
    <location>
        <begin position="1"/>
        <end position="20"/>
    </location>
</feature>
<feature type="chain" id="PRO_0000360809" description="High-affinity zinc uptake system protein ZnuA">
    <location>
        <begin position="21"/>
        <end position="319"/>
    </location>
</feature>
<feature type="binding site" evidence="10 11">
    <location>
        <position position="71"/>
    </location>
    <ligand>
        <name>Zn(2+)</name>
        <dbReference type="ChEBI" id="CHEBI:29105"/>
    </ligand>
</feature>
<feature type="binding site" evidence="10 11">
    <location>
        <position position="148"/>
    </location>
    <ligand>
        <name>Zn(2+)</name>
        <dbReference type="ChEBI" id="CHEBI:29105"/>
    </ligand>
</feature>
<feature type="binding site" evidence="1">
    <location>
        <position position="212"/>
    </location>
    <ligand>
        <name>Zn(2+)</name>
        <dbReference type="ChEBI" id="CHEBI:29105"/>
    </ligand>
</feature>
<feature type="binding site" evidence="10 11">
    <location>
        <position position="287"/>
    </location>
    <ligand>
        <name>Zn(2+)</name>
        <dbReference type="ChEBI" id="CHEBI:29105"/>
    </ligand>
</feature>
<feature type="lipid moiety-binding region" description="N-palmitoyl cysteine" evidence="3">
    <location>
        <position position="21"/>
    </location>
</feature>
<feature type="lipid moiety-binding region" description="S-diacylglycerol cysteine" evidence="3">
    <location>
        <position position="21"/>
    </location>
</feature>
<feature type="strand" evidence="12">
    <location>
        <begin position="37"/>
        <end position="43"/>
    </location>
</feature>
<feature type="helix" evidence="12">
    <location>
        <begin position="44"/>
        <end position="54"/>
    </location>
</feature>
<feature type="helix" evidence="12">
    <location>
        <begin position="55"/>
        <end position="57"/>
    </location>
</feature>
<feature type="strand" evidence="12">
    <location>
        <begin position="58"/>
        <end position="64"/>
    </location>
</feature>
<feature type="turn" evidence="12">
    <location>
        <begin position="70"/>
        <end position="72"/>
    </location>
</feature>
<feature type="helix" evidence="12">
    <location>
        <begin position="77"/>
        <end position="85"/>
    </location>
</feature>
<feature type="strand" evidence="12">
    <location>
        <begin position="86"/>
        <end position="92"/>
    </location>
</feature>
<feature type="turn" evidence="12">
    <location>
        <begin position="94"/>
        <end position="96"/>
    </location>
</feature>
<feature type="helix" evidence="12">
    <location>
        <begin position="100"/>
        <end position="105"/>
    </location>
</feature>
<feature type="strand" evidence="12">
    <location>
        <begin position="109"/>
        <end position="111"/>
    </location>
</feature>
<feature type="strand" evidence="12">
    <location>
        <begin position="113"/>
        <end position="116"/>
    </location>
</feature>
<feature type="turn" evidence="12">
    <location>
        <begin position="117"/>
        <end position="120"/>
    </location>
</feature>
<feature type="helix" evidence="12">
    <location>
        <begin position="149"/>
        <end position="151"/>
    </location>
</feature>
<feature type="helix" evidence="12">
    <location>
        <begin position="153"/>
        <end position="170"/>
    </location>
</feature>
<feature type="helix" evidence="12">
    <location>
        <begin position="172"/>
        <end position="174"/>
    </location>
</feature>
<feature type="helix" evidence="12">
    <location>
        <begin position="175"/>
        <end position="201"/>
    </location>
</feature>
<feature type="strand" evidence="12">
    <location>
        <begin position="207"/>
        <end position="212"/>
    </location>
</feature>
<feature type="helix" evidence="12">
    <location>
        <begin position="216"/>
        <end position="221"/>
    </location>
</feature>
<feature type="strand" evidence="12">
    <location>
        <begin position="225"/>
        <end position="228"/>
    </location>
</feature>
<feature type="strand" evidence="12">
    <location>
        <begin position="234"/>
        <end position="236"/>
    </location>
</feature>
<feature type="helix" evidence="12">
    <location>
        <begin position="240"/>
        <end position="249"/>
    </location>
</feature>
<feature type="strand" evidence="12">
    <location>
        <begin position="257"/>
        <end position="259"/>
    </location>
</feature>
<feature type="helix" evidence="12">
    <location>
        <begin position="266"/>
        <end position="274"/>
    </location>
</feature>
<feature type="strand" evidence="12">
    <location>
        <begin position="279"/>
        <end position="281"/>
    </location>
</feature>
<feature type="helix" evidence="12">
    <location>
        <begin position="291"/>
        <end position="296"/>
    </location>
</feature>
<feature type="helix" evidence="12">
    <location>
        <begin position="300"/>
        <end position="315"/>
    </location>
</feature>
<dbReference type="EMBL" id="AB000617">
    <property type="protein sequence ID" value="BAA22246.1"/>
    <property type="molecule type" value="Genomic_DNA"/>
</dbReference>
<dbReference type="EMBL" id="AL009126">
    <property type="protein sequence ID" value="CAB12079.1"/>
    <property type="molecule type" value="Genomic_DNA"/>
</dbReference>
<dbReference type="PIR" id="A69756">
    <property type="entry name" value="A69756"/>
</dbReference>
<dbReference type="RefSeq" id="NP_388167.1">
    <property type="nucleotide sequence ID" value="NC_000964.3"/>
</dbReference>
<dbReference type="RefSeq" id="WP_003234733.1">
    <property type="nucleotide sequence ID" value="NZ_OZ025638.1"/>
</dbReference>
<dbReference type="PDB" id="2O1E">
    <property type="method" value="X-ray"/>
    <property type="resolution" value="2.60 A"/>
    <property type="chains" value="A/B=22-319"/>
</dbReference>
<dbReference type="PDBsum" id="2O1E"/>
<dbReference type="SMR" id="O34966"/>
<dbReference type="FunCoup" id="O34966">
    <property type="interactions" value="214"/>
</dbReference>
<dbReference type="STRING" id="224308.BSU02850"/>
<dbReference type="TCDB" id="3.A.1.15.11">
    <property type="family name" value="the atp-binding cassette (abc) superfamily"/>
</dbReference>
<dbReference type="PaxDb" id="224308-BSU02850"/>
<dbReference type="DNASU" id="938370"/>
<dbReference type="EnsemblBacteria" id="CAB12079">
    <property type="protein sequence ID" value="CAB12079"/>
    <property type="gene ID" value="BSU_02850"/>
</dbReference>
<dbReference type="GeneID" id="938370"/>
<dbReference type="KEGG" id="bsu:BSU02850"/>
<dbReference type="PATRIC" id="fig|224308.179.peg.296"/>
<dbReference type="eggNOG" id="COG0803">
    <property type="taxonomic scope" value="Bacteria"/>
</dbReference>
<dbReference type="InParanoid" id="O34966"/>
<dbReference type="OrthoDB" id="9810636at2"/>
<dbReference type="PhylomeDB" id="O34966"/>
<dbReference type="BioCyc" id="BSUB:BSU02850-MONOMER"/>
<dbReference type="EvolutionaryTrace" id="O34966"/>
<dbReference type="Proteomes" id="UP000001570">
    <property type="component" value="Chromosome"/>
</dbReference>
<dbReference type="GO" id="GO:0045121">
    <property type="term" value="C:membrane raft"/>
    <property type="evidence" value="ECO:0007669"/>
    <property type="project" value="UniProtKB-SubCell"/>
</dbReference>
<dbReference type="GO" id="GO:0005886">
    <property type="term" value="C:plasma membrane"/>
    <property type="evidence" value="ECO:0007669"/>
    <property type="project" value="UniProtKB-SubCell"/>
</dbReference>
<dbReference type="GO" id="GO:0046872">
    <property type="term" value="F:metal ion binding"/>
    <property type="evidence" value="ECO:0007669"/>
    <property type="project" value="InterPro"/>
</dbReference>
<dbReference type="GO" id="GO:0007155">
    <property type="term" value="P:cell adhesion"/>
    <property type="evidence" value="ECO:0007669"/>
    <property type="project" value="InterPro"/>
</dbReference>
<dbReference type="GO" id="GO:0006829">
    <property type="term" value="P:zinc ion transport"/>
    <property type="evidence" value="ECO:0007669"/>
    <property type="project" value="UniProtKB-KW"/>
</dbReference>
<dbReference type="CDD" id="cd01017">
    <property type="entry name" value="AdcA"/>
    <property type="match status" value="1"/>
</dbReference>
<dbReference type="Gene3D" id="3.40.50.1980">
    <property type="entry name" value="Nitrogenase molybdenum iron protein domain"/>
    <property type="match status" value="2"/>
</dbReference>
<dbReference type="InterPro" id="IPR006129">
    <property type="entry name" value="AdhesinB"/>
</dbReference>
<dbReference type="InterPro" id="IPR050492">
    <property type="entry name" value="Bact_metal-bind_prot9"/>
</dbReference>
<dbReference type="InterPro" id="IPR006128">
    <property type="entry name" value="Lipoprotein_PsaA-like"/>
</dbReference>
<dbReference type="InterPro" id="IPR006127">
    <property type="entry name" value="ZnuA-like"/>
</dbReference>
<dbReference type="PANTHER" id="PTHR42953:SF3">
    <property type="entry name" value="HIGH-AFFINITY ZINC UPTAKE SYSTEM PROTEIN ZNUA"/>
    <property type="match status" value="1"/>
</dbReference>
<dbReference type="PANTHER" id="PTHR42953">
    <property type="entry name" value="HIGH-AFFINITY ZINC UPTAKE SYSTEM PROTEIN ZNUA-RELATED"/>
    <property type="match status" value="1"/>
</dbReference>
<dbReference type="Pfam" id="PF01297">
    <property type="entry name" value="ZnuA"/>
    <property type="match status" value="1"/>
</dbReference>
<dbReference type="PRINTS" id="PR00691">
    <property type="entry name" value="ADHESINB"/>
</dbReference>
<dbReference type="PRINTS" id="PR00690">
    <property type="entry name" value="ADHESNFAMILY"/>
</dbReference>
<dbReference type="SUPFAM" id="SSF53807">
    <property type="entry name" value="Helical backbone' metal receptor"/>
    <property type="match status" value="1"/>
</dbReference>
<dbReference type="PROSITE" id="PS51257">
    <property type="entry name" value="PROKAR_LIPOPROTEIN"/>
    <property type="match status" value="1"/>
</dbReference>
<name>ZNUA_BACSU</name>